<feature type="chain" id="PRO_0000117100" description="tRNA uridine 5-carboxymethylaminomethyl modification enzyme MnmG">
    <location>
        <begin position="1"/>
        <end position="629"/>
    </location>
</feature>
<feature type="binding site" evidence="1">
    <location>
        <begin position="13"/>
        <end position="18"/>
    </location>
    <ligand>
        <name>FAD</name>
        <dbReference type="ChEBI" id="CHEBI:57692"/>
    </ligand>
</feature>
<feature type="binding site" evidence="1">
    <location>
        <position position="125"/>
    </location>
    <ligand>
        <name>FAD</name>
        <dbReference type="ChEBI" id="CHEBI:57692"/>
    </ligand>
</feature>
<feature type="binding site" evidence="1">
    <location>
        <position position="180"/>
    </location>
    <ligand>
        <name>FAD</name>
        <dbReference type="ChEBI" id="CHEBI:57692"/>
    </ligand>
</feature>
<feature type="binding site" evidence="1">
    <location>
        <begin position="273"/>
        <end position="287"/>
    </location>
    <ligand>
        <name>NAD(+)</name>
        <dbReference type="ChEBI" id="CHEBI:57540"/>
    </ligand>
</feature>
<feature type="binding site" evidence="1">
    <location>
        <position position="370"/>
    </location>
    <ligand>
        <name>FAD</name>
        <dbReference type="ChEBI" id="CHEBI:57692"/>
    </ligand>
</feature>
<feature type="strand" evidence="2">
    <location>
        <begin position="7"/>
        <end position="13"/>
    </location>
</feature>
<feature type="helix" evidence="2">
    <location>
        <begin position="17"/>
        <end position="27"/>
    </location>
</feature>
<feature type="strand" evidence="2">
    <location>
        <begin position="32"/>
        <end position="35"/>
    </location>
</feature>
<feature type="helix" evidence="2">
    <location>
        <begin position="39"/>
        <end position="41"/>
    </location>
</feature>
<feature type="strand" evidence="2">
    <location>
        <begin position="49"/>
        <end position="52"/>
    </location>
</feature>
<feature type="helix" evidence="2">
    <location>
        <begin position="56"/>
        <end position="65"/>
    </location>
</feature>
<feature type="helix" evidence="2">
    <location>
        <begin position="70"/>
        <end position="76"/>
    </location>
</feature>
<feature type="strand" evidence="2">
    <location>
        <begin position="78"/>
        <end position="88"/>
    </location>
</feature>
<feature type="strand" evidence="2">
    <location>
        <begin position="94"/>
        <end position="99"/>
    </location>
</feature>
<feature type="helix" evidence="2">
    <location>
        <begin position="101"/>
        <end position="113"/>
    </location>
</feature>
<feature type="strand" evidence="2">
    <location>
        <begin position="118"/>
        <end position="121"/>
    </location>
</feature>
<feature type="strand" evidence="2">
    <location>
        <begin position="125"/>
        <end position="131"/>
    </location>
</feature>
<feature type="strand" evidence="2">
    <location>
        <begin position="134"/>
        <end position="143"/>
    </location>
</feature>
<feature type="strand" evidence="2">
    <location>
        <begin position="145"/>
        <end position="153"/>
    </location>
</feature>
<feature type="strand" evidence="2">
    <location>
        <begin position="163"/>
        <end position="166"/>
    </location>
</feature>
<feature type="helix" evidence="2">
    <location>
        <begin position="182"/>
        <end position="189"/>
    </location>
</feature>
<feature type="strand" evidence="2">
    <location>
        <begin position="194"/>
        <end position="197"/>
    </location>
</feature>
<feature type="strand" evidence="2">
    <location>
        <begin position="204"/>
        <end position="207"/>
    </location>
</feature>
<feature type="strand" evidence="2">
    <location>
        <begin position="214"/>
        <end position="218"/>
    </location>
</feature>
<feature type="strand" evidence="2">
    <location>
        <begin position="228"/>
        <end position="230"/>
    </location>
</feature>
<feature type="strand" evidence="2">
    <location>
        <begin position="242"/>
        <end position="245"/>
    </location>
</feature>
<feature type="helix" evidence="2">
    <location>
        <begin position="249"/>
        <end position="258"/>
    </location>
</feature>
<feature type="helix" evidence="2">
    <location>
        <begin position="280"/>
        <end position="284"/>
    </location>
</feature>
<feature type="strand" evidence="2">
    <location>
        <begin position="295"/>
        <end position="300"/>
    </location>
</feature>
<feature type="strand" evidence="2">
    <location>
        <begin position="306"/>
        <end position="310"/>
    </location>
</feature>
<feature type="helix" evidence="2">
    <location>
        <begin position="318"/>
        <end position="326"/>
    </location>
</feature>
<feature type="turn" evidence="2">
    <location>
        <begin position="329"/>
        <end position="332"/>
    </location>
</feature>
<feature type="strand" evidence="2">
    <location>
        <begin position="336"/>
        <end position="338"/>
    </location>
</feature>
<feature type="strand" evidence="2">
    <location>
        <begin position="341"/>
        <end position="343"/>
    </location>
</feature>
<feature type="strand" evidence="2">
    <location>
        <begin position="345"/>
        <end position="348"/>
    </location>
</feature>
<feature type="helix" evidence="2">
    <location>
        <begin position="350"/>
        <end position="352"/>
    </location>
</feature>
<feature type="strand" evidence="2">
    <location>
        <begin position="357"/>
        <end position="363"/>
    </location>
</feature>
<feature type="strand" evidence="2">
    <location>
        <begin position="365"/>
        <end position="367"/>
    </location>
</feature>
<feature type="helix" evidence="2">
    <location>
        <begin position="369"/>
        <end position="372"/>
    </location>
</feature>
<feature type="helix" evidence="2">
    <location>
        <begin position="378"/>
        <end position="395"/>
    </location>
</feature>
<feature type="turn" evidence="2">
    <location>
        <begin position="405"/>
        <end position="407"/>
    </location>
</feature>
<feature type="helix" evidence="2">
    <location>
        <begin position="409"/>
        <end position="416"/>
    </location>
</feature>
<feature type="turn" evidence="2">
    <location>
        <begin position="417"/>
        <end position="420"/>
    </location>
</feature>
<feature type="helix" evidence="2">
    <location>
        <begin position="426"/>
        <end position="432"/>
    </location>
</feature>
<feature type="turn" evidence="2">
    <location>
        <begin position="433"/>
        <end position="435"/>
    </location>
</feature>
<feature type="helix" evidence="2">
    <location>
        <begin position="444"/>
        <end position="455"/>
    </location>
</feature>
<feature type="helix" evidence="2">
    <location>
        <begin position="460"/>
        <end position="478"/>
    </location>
</feature>
<feature type="turn" evidence="2">
    <location>
        <begin position="479"/>
        <end position="481"/>
    </location>
</feature>
<feature type="strand" evidence="2">
    <location>
        <begin position="487"/>
        <end position="489"/>
    </location>
</feature>
<feature type="helix" evidence="2">
    <location>
        <begin position="492"/>
        <end position="496"/>
    </location>
</feature>
<feature type="strand" evidence="2">
    <location>
        <begin position="499"/>
        <end position="501"/>
    </location>
</feature>
<feature type="helix" evidence="2">
    <location>
        <begin position="509"/>
        <end position="514"/>
    </location>
</feature>
<feature type="helix" evidence="2">
    <location>
        <begin position="520"/>
        <end position="523"/>
    </location>
</feature>
<feature type="turn" evidence="2">
    <location>
        <begin position="527"/>
        <end position="529"/>
    </location>
</feature>
<feature type="helix" evidence="2">
    <location>
        <begin position="536"/>
        <end position="548"/>
    </location>
</feature>
<proteinExistence type="evidence at protein level"/>
<dbReference type="EMBL" id="AE005174">
    <property type="protein sequence ID" value="AAG58944.1"/>
    <property type="molecule type" value="Genomic_DNA"/>
</dbReference>
<dbReference type="EMBL" id="BA000007">
    <property type="protein sequence ID" value="BAB38106.1"/>
    <property type="molecule type" value="Genomic_DNA"/>
</dbReference>
<dbReference type="PIR" id="C91214">
    <property type="entry name" value="C91214"/>
</dbReference>
<dbReference type="PIR" id="D86060">
    <property type="entry name" value="D86060"/>
</dbReference>
<dbReference type="RefSeq" id="NP_312710.1">
    <property type="nucleotide sequence ID" value="NC_002695.1"/>
</dbReference>
<dbReference type="RefSeq" id="WP_000499793.1">
    <property type="nucleotide sequence ID" value="NZ_VOAI01000011.1"/>
</dbReference>
<dbReference type="PDB" id="3G05">
    <property type="method" value="X-ray"/>
    <property type="resolution" value="3.49 A"/>
    <property type="chains" value="A/B=2-550"/>
</dbReference>
<dbReference type="PDBsum" id="3G05"/>
<dbReference type="SMR" id="Q8XAY0"/>
<dbReference type="STRING" id="155864.Z5241"/>
<dbReference type="GeneID" id="915333"/>
<dbReference type="KEGG" id="ece:Z5241"/>
<dbReference type="KEGG" id="ecs:ECs_4683"/>
<dbReference type="PATRIC" id="fig|386585.9.peg.4889"/>
<dbReference type="eggNOG" id="COG0445">
    <property type="taxonomic scope" value="Bacteria"/>
</dbReference>
<dbReference type="HOGENOM" id="CLU_007831_2_2_6"/>
<dbReference type="OMA" id="CNPAMGG"/>
<dbReference type="EvolutionaryTrace" id="Q8XAY0"/>
<dbReference type="Proteomes" id="UP000000558">
    <property type="component" value="Chromosome"/>
</dbReference>
<dbReference type="Proteomes" id="UP000002519">
    <property type="component" value="Chromosome"/>
</dbReference>
<dbReference type="GO" id="GO:0005829">
    <property type="term" value="C:cytosol"/>
    <property type="evidence" value="ECO:0007669"/>
    <property type="project" value="TreeGrafter"/>
</dbReference>
<dbReference type="GO" id="GO:0050660">
    <property type="term" value="F:flavin adenine dinucleotide binding"/>
    <property type="evidence" value="ECO:0007669"/>
    <property type="project" value="UniProtKB-UniRule"/>
</dbReference>
<dbReference type="GO" id="GO:0030488">
    <property type="term" value="P:tRNA methylation"/>
    <property type="evidence" value="ECO:0007669"/>
    <property type="project" value="TreeGrafter"/>
</dbReference>
<dbReference type="GO" id="GO:0002098">
    <property type="term" value="P:tRNA wobble uridine modification"/>
    <property type="evidence" value="ECO:0007669"/>
    <property type="project" value="InterPro"/>
</dbReference>
<dbReference type="FunFam" id="1.10.10.1800:FF:000001">
    <property type="entry name" value="tRNA uridine 5-carboxymethylaminomethyl modification enzyme MnmG"/>
    <property type="match status" value="1"/>
</dbReference>
<dbReference type="FunFam" id="1.10.150.570:FF:000001">
    <property type="entry name" value="tRNA uridine 5-carboxymethylaminomethyl modification enzyme MnmG"/>
    <property type="match status" value="1"/>
</dbReference>
<dbReference type="FunFam" id="3.50.50.60:FF:000002">
    <property type="entry name" value="tRNA uridine 5-carboxymethylaminomethyl modification enzyme MnmG"/>
    <property type="match status" value="1"/>
</dbReference>
<dbReference type="FunFam" id="3.50.50.60:FF:000010">
    <property type="entry name" value="tRNA uridine 5-carboxymethylaminomethyl modification enzyme MnmG"/>
    <property type="match status" value="1"/>
</dbReference>
<dbReference type="Gene3D" id="3.50.50.60">
    <property type="entry name" value="FAD/NAD(P)-binding domain"/>
    <property type="match status" value="2"/>
</dbReference>
<dbReference type="Gene3D" id="1.10.150.570">
    <property type="entry name" value="GidA associated domain, C-terminal subdomain"/>
    <property type="match status" value="1"/>
</dbReference>
<dbReference type="Gene3D" id="1.10.10.1800">
    <property type="entry name" value="tRNA uridine 5-carboxymethylaminomethyl modification enzyme MnmG/GidA"/>
    <property type="match status" value="1"/>
</dbReference>
<dbReference type="HAMAP" id="MF_00129">
    <property type="entry name" value="MnmG_GidA"/>
    <property type="match status" value="1"/>
</dbReference>
<dbReference type="InterPro" id="IPR036188">
    <property type="entry name" value="FAD/NAD-bd_sf"/>
</dbReference>
<dbReference type="InterPro" id="IPR049312">
    <property type="entry name" value="GIDA_C_N"/>
</dbReference>
<dbReference type="InterPro" id="IPR004416">
    <property type="entry name" value="MnmG"/>
</dbReference>
<dbReference type="InterPro" id="IPR002218">
    <property type="entry name" value="MnmG-rel"/>
</dbReference>
<dbReference type="InterPro" id="IPR020595">
    <property type="entry name" value="MnmG-rel_CS"/>
</dbReference>
<dbReference type="InterPro" id="IPR026904">
    <property type="entry name" value="MnmG_C"/>
</dbReference>
<dbReference type="InterPro" id="IPR047001">
    <property type="entry name" value="MnmG_C_subdom"/>
</dbReference>
<dbReference type="InterPro" id="IPR044920">
    <property type="entry name" value="MnmG_C_subdom_sf"/>
</dbReference>
<dbReference type="InterPro" id="IPR040131">
    <property type="entry name" value="MnmG_N"/>
</dbReference>
<dbReference type="NCBIfam" id="TIGR00136">
    <property type="entry name" value="mnmG_gidA"/>
    <property type="match status" value="1"/>
</dbReference>
<dbReference type="PANTHER" id="PTHR11806">
    <property type="entry name" value="GLUCOSE INHIBITED DIVISION PROTEIN A"/>
    <property type="match status" value="1"/>
</dbReference>
<dbReference type="PANTHER" id="PTHR11806:SF0">
    <property type="entry name" value="PROTEIN MTO1 HOMOLOG, MITOCHONDRIAL"/>
    <property type="match status" value="1"/>
</dbReference>
<dbReference type="Pfam" id="PF01134">
    <property type="entry name" value="GIDA"/>
    <property type="match status" value="1"/>
</dbReference>
<dbReference type="Pfam" id="PF21680">
    <property type="entry name" value="GIDA_C_1st"/>
    <property type="match status" value="1"/>
</dbReference>
<dbReference type="Pfam" id="PF13932">
    <property type="entry name" value="SAM_GIDA_C"/>
    <property type="match status" value="1"/>
</dbReference>
<dbReference type="SMART" id="SM01228">
    <property type="entry name" value="GIDA_assoc_3"/>
    <property type="match status" value="1"/>
</dbReference>
<dbReference type="SUPFAM" id="SSF51905">
    <property type="entry name" value="FAD/NAD(P)-binding domain"/>
    <property type="match status" value="1"/>
</dbReference>
<dbReference type="PROSITE" id="PS01280">
    <property type="entry name" value="GIDA_1"/>
    <property type="match status" value="1"/>
</dbReference>
<dbReference type="PROSITE" id="PS01281">
    <property type="entry name" value="GIDA_2"/>
    <property type="match status" value="1"/>
</dbReference>
<protein>
    <recommendedName>
        <fullName evidence="1">tRNA uridine 5-carboxymethylaminomethyl modification enzyme MnmG</fullName>
    </recommendedName>
    <alternativeName>
        <fullName evidence="1">Glucose-inhibited division protein A</fullName>
    </alternativeName>
</protein>
<keyword id="KW-0002">3D-structure</keyword>
<keyword id="KW-0963">Cytoplasm</keyword>
<keyword id="KW-0274">FAD</keyword>
<keyword id="KW-0285">Flavoprotein</keyword>
<keyword id="KW-0520">NAD</keyword>
<keyword id="KW-1185">Reference proteome</keyword>
<keyword id="KW-0819">tRNA processing</keyword>
<evidence type="ECO:0000255" key="1">
    <source>
        <dbReference type="HAMAP-Rule" id="MF_00129"/>
    </source>
</evidence>
<evidence type="ECO:0007829" key="2">
    <source>
        <dbReference type="PDB" id="3G05"/>
    </source>
</evidence>
<gene>
    <name evidence="1" type="primary">mnmG</name>
    <name evidence="1" type="synonym">gidA</name>
    <name type="ordered locus">Z5241</name>
    <name type="ordered locus">ECs4683</name>
</gene>
<accession>Q8XAY0</accession>
<comment type="function">
    <text evidence="1">NAD-binding protein involved in the addition of a carboxymethylaminomethyl (cmnm) group at the wobble position (U34) of certain tRNAs, forming tRNA-cmnm(5)s(2)U34.</text>
</comment>
<comment type="cofactor">
    <cofactor evidence="1">
        <name>FAD</name>
        <dbReference type="ChEBI" id="CHEBI:57692"/>
    </cofactor>
</comment>
<comment type="subunit">
    <text evidence="1">Homodimer. Heterotetramer of two MnmE and two MnmG subunits.</text>
</comment>
<comment type="subcellular location">
    <subcellularLocation>
        <location evidence="1">Cytoplasm</location>
    </subcellularLocation>
</comment>
<comment type="similarity">
    <text evidence="1">Belongs to the MnmG family.</text>
</comment>
<name>MNMG_ECO57</name>
<sequence length="629" mass="69565">MFYPDPFDVIIIGGGHAGTEAAMAAARMGQQTLLLTHNIDTLGQMSCNPAIGGIGKGHLVKEVDALGGLMAKAIDQAGIQFRILNASKGPAVRATRAQADRVLYRQAVRTALENQPNLMIFQQAVEDLIVENDRVVGAVTQMGLKFRAKAVVLTVGTFLDGKIHIGLDNYSGGRAGDPPSIPLSRRLRELPLRVGRLKTGTPPRIDARTIDFSVLAQQHGDNPMPVFSFMGNASQHPQQVPCYITHTNEKTHDVIRSNLDRSPMYAGVIEGVGPRYCPSIEDKVMRFADRNQHQIFLEPEGLTSNEIYPNGISTSLPFDVQMQIVRSMQGMENAKIVRPGYAIEYDFFDPRDLKPTLESKFIQGLFFAGQINGTTGYEEAAAQGLLAGLNAARLSDDKEGWAPARSQAYLGVLVDDLCTLGTKEPYRMFTSRAEYRLMLREDNADLRLTEIGRELGLVDDERWARFNEKLENIERERQRLKSTWVTPSAEAAAEVNAHLTAPLSREASGEDLLRRPEMTYEKLTTLTPFAPALTDEQAAEQVEIQVKYEGYIARQQDEIEKQLRNENTLLPATLDYRQVSGLSNEVIAKLNDHKPASIGQASRISGVTPAAISILLVWLKKQGMLRRSA</sequence>
<organism>
    <name type="scientific">Escherichia coli O157:H7</name>
    <dbReference type="NCBI Taxonomy" id="83334"/>
    <lineage>
        <taxon>Bacteria</taxon>
        <taxon>Pseudomonadati</taxon>
        <taxon>Pseudomonadota</taxon>
        <taxon>Gammaproteobacteria</taxon>
        <taxon>Enterobacterales</taxon>
        <taxon>Enterobacteriaceae</taxon>
        <taxon>Escherichia</taxon>
    </lineage>
</organism>
<reference key="1">
    <citation type="journal article" date="2001" name="Nature">
        <title>Genome sequence of enterohaemorrhagic Escherichia coli O157:H7.</title>
        <authorList>
            <person name="Perna N.T."/>
            <person name="Plunkett G. III"/>
            <person name="Burland V."/>
            <person name="Mau B."/>
            <person name="Glasner J.D."/>
            <person name="Rose D.J."/>
            <person name="Mayhew G.F."/>
            <person name="Evans P.S."/>
            <person name="Gregor J."/>
            <person name="Kirkpatrick H.A."/>
            <person name="Posfai G."/>
            <person name="Hackett J."/>
            <person name="Klink S."/>
            <person name="Boutin A."/>
            <person name="Shao Y."/>
            <person name="Miller L."/>
            <person name="Grotbeck E.J."/>
            <person name="Davis N.W."/>
            <person name="Lim A."/>
            <person name="Dimalanta E.T."/>
            <person name="Potamousis K."/>
            <person name="Apodaca J."/>
            <person name="Anantharaman T.S."/>
            <person name="Lin J."/>
            <person name="Yen G."/>
            <person name="Schwartz D.C."/>
            <person name="Welch R.A."/>
            <person name="Blattner F.R."/>
        </authorList>
    </citation>
    <scope>NUCLEOTIDE SEQUENCE [LARGE SCALE GENOMIC DNA]</scope>
    <source>
        <strain>O157:H7 / EDL933 / ATCC 700927 / EHEC</strain>
    </source>
</reference>
<reference key="2">
    <citation type="journal article" date="2001" name="DNA Res.">
        <title>Complete genome sequence of enterohemorrhagic Escherichia coli O157:H7 and genomic comparison with a laboratory strain K-12.</title>
        <authorList>
            <person name="Hayashi T."/>
            <person name="Makino K."/>
            <person name="Ohnishi M."/>
            <person name="Kurokawa K."/>
            <person name="Ishii K."/>
            <person name="Yokoyama K."/>
            <person name="Han C.-G."/>
            <person name="Ohtsubo E."/>
            <person name="Nakayama K."/>
            <person name="Murata T."/>
            <person name="Tanaka M."/>
            <person name="Tobe T."/>
            <person name="Iida T."/>
            <person name="Takami H."/>
            <person name="Honda T."/>
            <person name="Sasakawa C."/>
            <person name="Ogasawara N."/>
            <person name="Yasunaga T."/>
            <person name="Kuhara S."/>
            <person name="Shiba T."/>
            <person name="Hattori M."/>
            <person name="Shinagawa H."/>
        </authorList>
    </citation>
    <scope>NUCLEOTIDE SEQUENCE [LARGE SCALE GENOMIC DNA]</scope>
    <source>
        <strain>O157:H7 / Sakai / RIMD 0509952 / EHEC</strain>
    </source>
</reference>